<feature type="chain" id="PRO_0000096495" description="Post-transcriptional regulator MKT1">
    <location>
        <begin position="1"/>
        <end position="830"/>
    </location>
</feature>
<feature type="region of interest" description="Interaction with PBP1" evidence="3">
    <location>
        <begin position="130"/>
        <end position="380"/>
    </location>
</feature>
<feature type="region of interest" description="Disordered" evidence="1">
    <location>
        <begin position="347"/>
        <end position="400"/>
    </location>
</feature>
<feature type="compositionally biased region" description="Low complexity" evidence="1">
    <location>
        <begin position="361"/>
        <end position="373"/>
    </location>
</feature>
<feature type="compositionally biased region" description="Basic and acidic residues" evidence="1">
    <location>
        <begin position="380"/>
        <end position="400"/>
    </location>
</feature>
<feature type="modified residue" description="Phosphoserine" evidence="5">
    <location>
        <position position="358"/>
    </location>
</feature>
<feature type="modified residue" description="Phosphoserine" evidence="5">
    <location>
        <position position="362"/>
    </location>
</feature>
<feature type="modified residue" description="Phosphoserine" evidence="5">
    <location>
        <position position="371"/>
    </location>
</feature>
<feature type="cross-link" description="Glycyl lysine isopeptide (Lys-Gly) (interchain with G-Cter in ubiquitin)" evidence="6">
    <location>
        <position position="4"/>
    </location>
</feature>
<feature type="sequence variant" description="In strain: 2574, ATCC 24657 / D273-10B, ATCC 200060 / W303, Sigma 1278B, YJM 1129, YJM 270, YJM 627 and YJM 789.">
    <original>D</original>
    <variation>G</variation>
    <location>
        <position position="30"/>
    </location>
</feature>
<feature type="sequence variant" description="In strain: ATCC 24657 / D273-10B, ATCC 200060 / W303, Sigma 1278B, YJM 1129, YJM 270, YJM 627 and YJM 789.">
    <original>K</original>
    <variation>R</variation>
    <location>
        <position position="453"/>
    </location>
</feature>
<feature type="mutagenesis site" description="Decreases gene expression from the ho locus." evidence="3">
    <original>D</original>
    <variation>A</variation>
    <location>
        <position position="32"/>
    </location>
</feature>
<feature type="mutagenesis site" description="In mkt1-19; HO gene expression is decreased." evidence="3">
    <location>
        <begin position="130"/>
        <end position="380"/>
    </location>
</feature>
<feature type="sequence conflict" description="In Ref. 1; AAC49470." evidence="4" ref="1">
    <original>IDENVFKLFTKAVEFTTTALSS</original>
    <variation>TMKTCLNYH</variation>
    <location>
        <begin position="809"/>
        <end position="830"/>
    </location>
</feature>
<sequence length="830" mass="94495">MAIKSLESFLFERGLVGSYAIEALNNCTLDIDVNHYVSRLLTNKREQYLDAIGGFPTSLKMYLESDLKIFKDFNITPIFVFNGGLTYNQLEASGHFTAASASASISSTTTSSSGTNATTRSNTESVLLQRSRGWTQWNNLISSNQNSYIDQPIQPQEPFRHNTTIDSKAYQNDLIAYFIEHGYMYQVAPYSSWFQLAYLLNSAYIDAIYGPTDCLMLDCVDRFILGMEFPNKEFRFIDRSRVMKDLGCTHEEFIDIAMAVGNDLQPTTLPPLQIYPVPQLFDIALEMVLNTGTNFYAYQLSTTLQNDSKENIQNYQRGISALRYMPVLKDTGKVELFVQEIVVSEEDSEKNNKDGKKSNLSSPSSASSSASPATTVTKNASEKLTYEKSSTKEVRKPRDIPNDVHDFIGQMLPHEYYFYRSIGLVTGKLFDAIVTGVYPEEPPLGGGSSTSYKKLVSKSVEIFKNKEINLLTQPINRYYQIKQIKQVKWYAANEPTTLTNRMSPSMFETINHLIVKTETSDEKEFSISEFITTINGSSNMAKDFISEKVIFPNSVPIESKLNSPFNLLSTNFLRLLVLLEFFTFDFKEKLLEPTRWGEVFLKLNELNIDSKYHESVIIFLVFLKCDVLKLDEEVQPPAPSALSQATLRSYPEESLYVLLITRVLTLFQVDQKPSNYHGPIDKKTLIFRDHLSFIKENLNELFEAVLISSLTSGEFNRLSLDNFGWARKIVRYLPFKLDSPNTIMAMMWEFFLQKYLHNGNAKNDALSLVATEFNTYKSTPNLDEQFVESHRFLLEISKVMQELNAAKLIDENVFKLFTKAVEFTTTALSS</sequence>
<name>MKT1_YEAST</name>
<dbReference type="EMBL" id="U09129">
    <property type="protein sequence ID" value="AAC49470.1"/>
    <property type="molecule type" value="Genomic_DNA"/>
</dbReference>
<dbReference type="EMBL" id="AF458969">
    <property type="protein sequence ID" value="AAM00519.1"/>
    <property type="molecule type" value="Genomic_DNA"/>
</dbReference>
<dbReference type="EMBL" id="AF458975">
    <property type="protein sequence ID" value="AAM00555.1"/>
    <property type="molecule type" value="Genomic_DNA"/>
</dbReference>
<dbReference type="EMBL" id="AF458977">
    <property type="protein sequence ID" value="AAM00567.1"/>
    <property type="molecule type" value="Genomic_DNA"/>
</dbReference>
<dbReference type="EMBL" id="AF458978">
    <property type="protein sequence ID" value="AAM00573.1"/>
    <property type="molecule type" value="Genomic_DNA"/>
</dbReference>
<dbReference type="EMBL" id="AF458980">
    <property type="protein sequence ID" value="AAM00585.1"/>
    <property type="molecule type" value="Genomic_DNA"/>
</dbReference>
<dbReference type="EMBL" id="AF458981">
    <property type="protein sequence ID" value="AAM00591.1"/>
    <property type="molecule type" value="Genomic_DNA"/>
</dbReference>
<dbReference type="EMBL" id="DQ116825">
    <property type="protein sequence ID" value="AAZ23277.1"/>
    <property type="molecule type" value="Genomic_DNA"/>
</dbReference>
<dbReference type="EMBL" id="DQ116826">
    <property type="protein sequence ID" value="AAZ23278.1"/>
    <property type="molecule type" value="Genomic_DNA"/>
</dbReference>
<dbReference type="EMBL" id="DQ116827">
    <property type="protein sequence ID" value="AAZ23279.1"/>
    <property type="molecule type" value="Genomic_DNA"/>
</dbReference>
<dbReference type="EMBL" id="DQ116828">
    <property type="protein sequence ID" value="AAZ23280.1"/>
    <property type="molecule type" value="Genomic_DNA"/>
</dbReference>
<dbReference type="EMBL" id="X89016">
    <property type="protein sequence ID" value="CAA61425.1"/>
    <property type="molecule type" value="Genomic_DNA"/>
</dbReference>
<dbReference type="EMBL" id="Z71361">
    <property type="protein sequence ID" value="CAA95961.1"/>
    <property type="molecule type" value="Genomic_DNA"/>
</dbReference>
<dbReference type="EMBL" id="Z71360">
    <property type="protein sequence ID" value="CAA95960.1"/>
    <property type="molecule type" value="Genomic_DNA"/>
</dbReference>
<dbReference type="EMBL" id="BK006947">
    <property type="protein sequence ID" value="DAA10460.1"/>
    <property type="molecule type" value="Genomic_DNA"/>
</dbReference>
<dbReference type="PIR" id="S57537">
    <property type="entry name" value="S57537"/>
</dbReference>
<dbReference type="RefSeq" id="NP_014314.3">
    <property type="nucleotide sequence ID" value="NM_001182923.3"/>
</dbReference>
<dbReference type="BioGRID" id="35738">
    <property type="interactions" value="386"/>
</dbReference>
<dbReference type="ComplexPortal" id="CPX-1295">
    <property type="entry name" value="MKT1-PBP1 translation regulation complex"/>
</dbReference>
<dbReference type="DIP" id="DIP-6530N"/>
<dbReference type="FunCoup" id="P40850">
    <property type="interactions" value="472"/>
</dbReference>
<dbReference type="IntAct" id="P40850">
    <property type="interactions" value="65"/>
</dbReference>
<dbReference type="MINT" id="P40850"/>
<dbReference type="STRING" id="4932.YNL085W"/>
<dbReference type="GlyGen" id="P40850">
    <property type="glycosylation" value="1 site, 1 O-linked glycan (1 site)"/>
</dbReference>
<dbReference type="iPTMnet" id="P40850"/>
<dbReference type="PaxDb" id="4932-YNL085W"/>
<dbReference type="PeptideAtlas" id="P40850"/>
<dbReference type="EnsemblFungi" id="YNL085W_mRNA">
    <property type="protein sequence ID" value="YNL085W"/>
    <property type="gene ID" value="YNL085W"/>
</dbReference>
<dbReference type="GeneID" id="855639"/>
<dbReference type="KEGG" id="sce:YNL085W"/>
<dbReference type="AGR" id="SGD:S000005029"/>
<dbReference type="SGD" id="S000005029">
    <property type="gene designation" value="MKT1"/>
</dbReference>
<dbReference type="VEuPathDB" id="FungiDB:YNL085W"/>
<dbReference type="eggNOG" id="ENOG502QVHA">
    <property type="taxonomic scope" value="Eukaryota"/>
</dbReference>
<dbReference type="HOGENOM" id="CLU_378548_0_0_1"/>
<dbReference type="InParanoid" id="P40850"/>
<dbReference type="OMA" id="RFYQTKV"/>
<dbReference type="OrthoDB" id="17262at2759"/>
<dbReference type="BioCyc" id="YEAST:G3O-33114-MONOMER"/>
<dbReference type="BioGRID-ORCS" id="855639">
    <property type="hits" value="0 hits in 10 CRISPR screens"/>
</dbReference>
<dbReference type="CD-CODE" id="E03F929F">
    <property type="entry name" value="Stress granule"/>
</dbReference>
<dbReference type="PRO" id="PR:P40850"/>
<dbReference type="Proteomes" id="UP000002311">
    <property type="component" value="Chromosome XIV"/>
</dbReference>
<dbReference type="RNAct" id="P40850">
    <property type="molecule type" value="protein"/>
</dbReference>
<dbReference type="GO" id="GO:0005737">
    <property type="term" value="C:cytoplasm"/>
    <property type="evidence" value="ECO:0007005"/>
    <property type="project" value="SGD"/>
</dbReference>
<dbReference type="GO" id="GO:0010494">
    <property type="term" value="C:cytoplasmic stress granule"/>
    <property type="evidence" value="ECO:0007005"/>
    <property type="project" value="SGD"/>
</dbReference>
<dbReference type="GO" id="GO:0005829">
    <property type="term" value="C:cytosol"/>
    <property type="evidence" value="ECO:0000314"/>
    <property type="project" value="UniProtKB"/>
</dbReference>
<dbReference type="GO" id="GO:0034399">
    <property type="term" value="C:nuclear periphery"/>
    <property type="evidence" value="ECO:0000314"/>
    <property type="project" value="SGD"/>
</dbReference>
<dbReference type="GO" id="GO:0000932">
    <property type="term" value="C:P-body"/>
    <property type="evidence" value="ECO:0000314"/>
    <property type="project" value="SGD"/>
</dbReference>
<dbReference type="GO" id="GO:0005840">
    <property type="term" value="C:ribosome"/>
    <property type="evidence" value="ECO:0000353"/>
    <property type="project" value="ComplexPortal"/>
</dbReference>
<dbReference type="GO" id="GO:0004520">
    <property type="term" value="F:DNA endonuclease activity"/>
    <property type="evidence" value="ECO:0000250"/>
    <property type="project" value="SGD"/>
</dbReference>
<dbReference type="GO" id="GO:0003730">
    <property type="term" value="F:mRNA 3'-UTR binding"/>
    <property type="evidence" value="ECO:0000318"/>
    <property type="project" value="GO_Central"/>
</dbReference>
<dbReference type="GO" id="GO:0006974">
    <property type="term" value="P:DNA damage response"/>
    <property type="evidence" value="ECO:0000315"/>
    <property type="project" value="SGD"/>
</dbReference>
<dbReference type="GO" id="GO:0045727">
    <property type="term" value="P:positive regulation of translation"/>
    <property type="evidence" value="ECO:0000315"/>
    <property type="project" value="UniProtKB"/>
</dbReference>
<dbReference type="GO" id="GO:0031494">
    <property type="term" value="P:regulation of mating type switching"/>
    <property type="evidence" value="ECO:0000303"/>
    <property type="project" value="ComplexPortal"/>
</dbReference>
<dbReference type="GO" id="GO:0006417">
    <property type="term" value="P:regulation of translation"/>
    <property type="evidence" value="ECO:0000303"/>
    <property type="project" value="ComplexPortal"/>
</dbReference>
<dbReference type="CDD" id="cd09902">
    <property type="entry name" value="H3TH_MKT1"/>
    <property type="match status" value="1"/>
</dbReference>
<dbReference type="CDD" id="cd09858">
    <property type="entry name" value="PIN_MKT1"/>
    <property type="match status" value="1"/>
</dbReference>
<dbReference type="Gene3D" id="3.40.50.1010">
    <property type="entry name" value="5'-nuclease"/>
    <property type="match status" value="1"/>
</dbReference>
<dbReference type="InterPro" id="IPR022039">
    <property type="entry name" value="MKT1_C"/>
</dbReference>
<dbReference type="InterPro" id="IPR037314">
    <property type="entry name" value="MKT1_H3TH"/>
</dbReference>
<dbReference type="InterPro" id="IPR022040">
    <property type="entry name" value="MKT1_N"/>
</dbReference>
<dbReference type="InterPro" id="IPR029060">
    <property type="entry name" value="PIN-like_dom_sf"/>
</dbReference>
<dbReference type="InterPro" id="IPR006086">
    <property type="entry name" value="XPG-I_dom"/>
</dbReference>
<dbReference type="InterPro" id="IPR006084">
    <property type="entry name" value="XPG/Rad2"/>
</dbReference>
<dbReference type="InterPro" id="IPR006085">
    <property type="entry name" value="XPG_DNA_repair_N"/>
</dbReference>
<dbReference type="PANTHER" id="PTHR11081">
    <property type="entry name" value="FLAP ENDONUCLEASE FAMILY MEMBER"/>
    <property type="match status" value="1"/>
</dbReference>
<dbReference type="PANTHER" id="PTHR11081:SF32">
    <property type="entry name" value="POST-TRANSCRIPTIONAL REGULATOR MKT1"/>
    <property type="match status" value="1"/>
</dbReference>
<dbReference type="Pfam" id="PF12246">
    <property type="entry name" value="MKT1_C"/>
    <property type="match status" value="1"/>
</dbReference>
<dbReference type="Pfam" id="PF12247">
    <property type="entry name" value="MKT1_N"/>
    <property type="match status" value="1"/>
</dbReference>
<dbReference type="Pfam" id="PF00752">
    <property type="entry name" value="XPG_N"/>
    <property type="match status" value="1"/>
</dbReference>
<dbReference type="SMART" id="SM00484">
    <property type="entry name" value="XPGI"/>
    <property type="match status" value="1"/>
</dbReference>
<dbReference type="SMART" id="SM00485">
    <property type="entry name" value="XPGN"/>
    <property type="match status" value="1"/>
</dbReference>
<dbReference type="SUPFAM" id="SSF88723">
    <property type="entry name" value="PIN domain-like"/>
    <property type="match status" value="1"/>
</dbReference>
<proteinExistence type="evidence at protein level"/>
<organism>
    <name type="scientific">Saccharomyces cerevisiae (strain ATCC 204508 / S288c)</name>
    <name type="common">Baker's yeast</name>
    <dbReference type="NCBI Taxonomy" id="559292"/>
    <lineage>
        <taxon>Eukaryota</taxon>
        <taxon>Fungi</taxon>
        <taxon>Dikarya</taxon>
        <taxon>Ascomycota</taxon>
        <taxon>Saccharomycotina</taxon>
        <taxon>Saccharomycetes</taxon>
        <taxon>Saccharomycetales</taxon>
        <taxon>Saccharomycetaceae</taxon>
        <taxon>Saccharomyces</taxon>
    </lineage>
</organism>
<keyword id="KW-0963">Cytoplasm</keyword>
<keyword id="KW-1017">Isopeptide bond</keyword>
<keyword id="KW-0597">Phosphoprotein</keyword>
<keyword id="KW-1185">Reference proteome</keyword>
<keyword id="KW-0810">Translation regulation</keyword>
<keyword id="KW-0832">Ubl conjugation</keyword>
<accession>P40850</accession>
<accession>D6W194</accession>
<accession>Q45T81</accession>
<accession>Q8TF89</accession>
<protein>
    <recommendedName>
        <fullName evidence="4">Post-transcriptional regulator MKT1</fullName>
    </recommendedName>
    <alternativeName>
        <fullName evidence="4">Inactive endonuclease MKT1</fullName>
    </alternativeName>
</protein>
<comment type="function">
    <text evidence="3">Involved in 3'-UTR mediated RNA regulation (PubMed:15082763). Binds to RNA-binding and RNA regulatory proteins (PubMed:15082763). Complexes with PAB1-binding protein to promote mRNA interactions with poly(A)-binding protein (PubMed:15082763). Promotes mating-type switching in mother cells by positively regulating HO expression (PubMed:15082763).</text>
</comment>
<comment type="subunit">
    <text evidence="3">Interacts (via C-terminus) with PBP1 (via C-terminus).</text>
</comment>
<comment type="interaction">
    <interactant intactId="EBI-10983">
        <id>P40850</id>
    </interactant>
    <interactant intactId="EBI-12961">
        <id>P53297</id>
        <label>PBP1</label>
    </interactant>
    <organismsDiffer>false</organismsDiffer>
    <experiments>3</experiments>
</comment>
<comment type="subcellular location">
    <subcellularLocation>
        <location evidence="3">Cytoplasm</location>
        <location evidence="3">Cytosol</location>
    </subcellularLocation>
    <text evidence="3">Localizes to polysomes in a PBP1-dependent manner.</text>
</comment>
<comment type="disruption phenotype">
    <text evidence="3">Normal vegetative cell population growth rate and morphology (PubMed:15082763). Decreases expression from the HO locus (PubMed:15082763).</text>
</comment>
<comment type="miscellaneous">
    <text evidence="2">Present with 3430 molecules/cell in log phase SD medium.</text>
</comment>
<comment type="similarity">
    <text evidence="4">Belongs to the XPG/RAD2 endonuclease family.</text>
</comment>
<comment type="caution">
    <text evidence="4">Although it belongs to the XPG/RAD2 endonuclease family, only two of the seven Asp residues involved in Mg(2+) binding are conserved suggesting that it has no nuclease activity.</text>
</comment>
<reference key="1">
    <citation type="journal article" date="1994" name="Yeast">
        <title>Sequence of MKT1, needed for propagation of M2 satellite dsRNA of the L-A virus of Saccharomyces cerevisiae.</title>
        <authorList>
            <person name="Vermut M."/>
            <person name="Widner W.R."/>
            <person name="Dinman J.D."/>
            <person name="Wickner R.B."/>
        </authorList>
    </citation>
    <scope>NUCLEOTIDE SEQUENCE [GENOMIC DNA]</scope>
    <source>
        <strain>2574</strain>
    </source>
</reference>
<reference key="2">
    <citation type="journal article" date="2002" name="Nature">
        <title>Dissecting the architecture of a quantitative trait locus in yeast.</title>
        <authorList>
            <person name="Steinmetz L.M."/>
            <person name="Sinha H."/>
            <person name="Richards D.R."/>
            <person name="Spiegelman J.I."/>
            <person name="Oefner P.J."/>
            <person name="McCusker J.H."/>
            <person name="Davis R.W."/>
        </authorList>
    </citation>
    <scope>NUCLEOTIDE SEQUENCE [GENOMIC DNA]</scope>
    <source>
        <strain>ATCC 200060 / W303</strain>
        <strain>S96</strain>
        <strain>YJM 1129</strain>
        <strain>YJM 270</strain>
        <strain>YJM 627</strain>
        <strain>YJM 789</strain>
    </source>
</reference>
<reference key="3">
    <citation type="journal article" date="2005" name="Nat. Genet.">
        <title>Quantitative trait loci mapped to single-nucleotide resolution in yeast.</title>
        <authorList>
            <person name="Deutschbauer A.M."/>
            <person name="Davis R.W."/>
        </authorList>
    </citation>
    <scope>NUCLEOTIDE SEQUENCE [GENOMIC DNA]</scope>
    <source>
        <strain>ATCC 204508 / S288c</strain>
        <strain>ATCC 204626 / S288c / A364A</strain>
        <strain>ATCC 24657 / D273-10B</strain>
        <strain>Sigma 1278B</strain>
    </source>
</reference>
<reference key="4">
    <citation type="journal article" date="1996" name="Yeast">
        <title>The sequence of a 17,933 bp segment of Saccharomyces cerevisiae chromosome XIV contains the RHO2, TOP2, MKT1 and END3 genes and five new open reading frames.</title>
        <authorList>
            <person name="Soler-Mira A."/>
            <person name="Saiz J.E."/>
            <person name="Ballesta J.P.G."/>
            <person name="Remacha M.A."/>
        </authorList>
    </citation>
    <scope>NUCLEOTIDE SEQUENCE [GENOMIC DNA]</scope>
    <source>
        <strain>ATCC 96604 / S288c / FY1679</strain>
    </source>
</reference>
<reference key="5">
    <citation type="journal article" date="1997" name="Nature">
        <title>The nucleotide sequence of Saccharomyces cerevisiae chromosome XIV and its evolutionary implications.</title>
        <authorList>
            <person name="Philippsen P."/>
            <person name="Kleine K."/>
            <person name="Poehlmann R."/>
            <person name="Duesterhoeft A."/>
            <person name="Hamberg K."/>
            <person name="Hegemann J.H."/>
            <person name="Obermaier B."/>
            <person name="Urrestarazu L.A."/>
            <person name="Aert R."/>
            <person name="Albermann K."/>
            <person name="Altmann R."/>
            <person name="Andre B."/>
            <person name="Baladron V."/>
            <person name="Ballesta J.P.G."/>
            <person name="Becam A.-M."/>
            <person name="Beinhauer J.D."/>
            <person name="Boskovic J."/>
            <person name="Buitrago M.J."/>
            <person name="Bussereau F."/>
            <person name="Coster F."/>
            <person name="Crouzet M."/>
            <person name="D'Angelo M."/>
            <person name="Dal Pero F."/>
            <person name="De Antoni A."/>
            <person name="del Rey F."/>
            <person name="Doignon F."/>
            <person name="Domdey H."/>
            <person name="Dubois E."/>
            <person name="Fiedler T.A."/>
            <person name="Fleig U."/>
            <person name="Floeth M."/>
            <person name="Fritz C."/>
            <person name="Gaillardin C."/>
            <person name="Garcia-Cantalejo J.M."/>
            <person name="Glansdorff N."/>
            <person name="Goffeau A."/>
            <person name="Gueldener U."/>
            <person name="Herbert C.J."/>
            <person name="Heumann K."/>
            <person name="Heuss-Neitzel D."/>
            <person name="Hilbert H."/>
            <person name="Hinni K."/>
            <person name="Iraqui Houssaini I."/>
            <person name="Jacquet M."/>
            <person name="Jimenez A."/>
            <person name="Jonniaux J.-L."/>
            <person name="Karpfinger-Hartl L."/>
            <person name="Lanfranchi G."/>
            <person name="Lepingle A."/>
            <person name="Levesque H."/>
            <person name="Lyck R."/>
            <person name="Maftahi M."/>
            <person name="Mallet L."/>
            <person name="Maurer C.T.C."/>
            <person name="Messenguy F."/>
            <person name="Mewes H.-W."/>
            <person name="Moestl D."/>
            <person name="Nasr F."/>
            <person name="Nicaud J.-M."/>
            <person name="Niedenthal R.K."/>
            <person name="Pandolfo D."/>
            <person name="Pierard A."/>
            <person name="Piravandi E."/>
            <person name="Planta R.J."/>
            <person name="Pohl T.M."/>
            <person name="Purnelle B."/>
            <person name="Rebischung C."/>
            <person name="Remacha M.A."/>
            <person name="Revuelta J.L."/>
            <person name="Rinke M."/>
            <person name="Saiz J.E."/>
            <person name="Sartorello F."/>
            <person name="Scherens B."/>
            <person name="Sen-Gupta M."/>
            <person name="Soler-Mira A."/>
            <person name="Urbanus J.H.M."/>
            <person name="Valle G."/>
            <person name="Van Dyck L."/>
            <person name="Verhasselt P."/>
            <person name="Vierendeels F."/>
            <person name="Vissers S."/>
            <person name="Voet M."/>
            <person name="Volckaert G."/>
            <person name="Wach A."/>
            <person name="Wambutt R."/>
            <person name="Wedler H."/>
            <person name="Zollner A."/>
            <person name="Hani J."/>
        </authorList>
    </citation>
    <scope>NUCLEOTIDE SEQUENCE [LARGE SCALE GENOMIC DNA]</scope>
    <source>
        <strain>ATCC 204508 / S288c</strain>
    </source>
</reference>
<reference key="6">
    <citation type="journal article" date="2014" name="G3 (Bethesda)">
        <title>The reference genome sequence of Saccharomyces cerevisiae: Then and now.</title>
        <authorList>
            <person name="Engel S.R."/>
            <person name="Dietrich F.S."/>
            <person name="Fisk D.G."/>
            <person name="Binkley G."/>
            <person name="Balakrishnan R."/>
            <person name="Costanzo M.C."/>
            <person name="Dwight S.S."/>
            <person name="Hitz B.C."/>
            <person name="Karra K."/>
            <person name="Nash R.S."/>
            <person name="Weng S."/>
            <person name="Wong E.D."/>
            <person name="Lloyd P."/>
            <person name="Skrzypek M.S."/>
            <person name="Miyasato S.R."/>
            <person name="Simison M."/>
            <person name="Cherry J.M."/>
        </authorList>
    </citation>
    <scope>GENOME REANNOTATION</scope>
    <source>
        <strain>ATCC 204508 / S288c</strain>
    </source>
</reference>
<reference key="7">
    <citation type="journal article" date="2003" name="Nature">
        <title>Global analysis of protein expression in yeast.</title>
        <authorList>
            <person name="Ghaemmaghami S."/>
            <person name="Huh W.-K."/>
            <person name="Bower K."/>
            <person name="Howson R.W."/>
            <person name="Belle A."/>
            <person name="Dephoure N."/>
            <person name="O'Shea E.K."/>
            <person name="Weissman J.S."/>
        </authorList>
    </citation>
    <scope>LEVEL OF PROTEIN EXPRESSION [LARGE SCALE ANALYSIS]</scope>
</reference>
<reference key="8">
    <citation type="journal article" date="2004" name="Mol. Cell. Biol.">
        <title>Posttranscriptional regulation of HO expression by the Mkt1-Pbp1 complex.</title>
        <authorList>
            <person name="Tadauchi T."/>
            <person name="Inada T."/>
            <person name="Matsumoto K."/>
            <person name="Irie K."/>
        </authorList>
    </citation>
    <scope>FUNCTION</scope>
    <scope>INTERACTION WITH PBP1</scope>
    <scope>SUBCELLULAR LOCATION</scope>
    <scope>DISRUPTION PHENOTYPE</scope>
    <scope>MUTAGENESIS OF ASP-32</scope>
</reference>
<reference key="9">
    <citation type="journal article" date="2005" name="Mol. Cell. Proteomics">
        <title>Quantitative phosphoproteomics applied to the yeast pheromone signaling pathway.</title>
        <authorList>
            <person name="Gruhler A."/>
            <person name="Olsen J.V."/>
            <person name="Mohammed S."/>
            <person name="Mortensen P."/>
            <person name="Faergeman N.J."/>
            <person name="Mann M."/>
            <person name="Jensen O.N."/>
        </authorList>
    </citation>
    <scope>IDENTIFICATION BY MASS SPECTROMETRY [LARGE SCALE ANALYSIS]</scope>
    <source>
        <strain>YAL6B</strain>
    </source>
</reference>
<reference key="10">
    <citation type="journal article" date="2007" name="J. Proteome Res.">
        <title>Large-scale phosphorylation analysis of alpha-factor-arrested Saccharomyces cerevisiae.</title>
        <authorList>
            <person name="Li X."/>
            <person name="Gerber S.A."/>
            <person name="Rudner A.D."/>
            <person name="Beausoleil S.A."/>
            <person name="Haas W."/>
            <person name="Villen J."/>
            <person name="Elias J.E."/>
            <person name="Gygi S.P."/>
        </authorList>
    </citation>
    <scope>PHOSPHORYLATION [LARGE SCALE ANALYSIS] AT SER-358; SER-362 AND SER-371</scope>
    <scope>IDENTIFICATION BY MASS SPECTROMETRY [LARGE SCALE ANALYSIS]</scope>
    <source>
        <strain>ADR376</strain>
    </source>
</reference>
<reference key="11">
    <citation type="journal article" date="2008" name="Mol. Cell. Proteomics">
        <title>A multidimensional chromatography technology for in-depth phosphoproteome analysis.</title>
        <authorList>
            <person name="Albuquerque C.P."/>
            <person name="Smolka M.B."/>
            <person name="Payne S.H."/>
            <person name="Bafna V."/>
            <person name="Eng J."/>
            <person name="Zhou H."/>
        </authorList>
    </citation>
    <scope>IDENTIFICATION BY MASS SPECTROMETRY [LARGE SCALE ANALYSIS]</scope>
</reference>
<reference key="12">
    <citation type="journal article" date="2012" name="Proc. Natl. Acad. Sci. U.S.A.">
        <title>N-terminal acetylome analyses and functional insights of the N-terminal acetyltransferase NatB.</title>
        <authorList>
            <person name="Van Damme P."/>
            <person name="Lasa M."/>
            <person name="Polevoda B."/>
            <person name="Gazquez C."/>
            <person name="Elosegui-Artola A."/>
            <person name="Kim D.S."/>
            <person name="De Juan-Pardo E."/>
            <person name="Demeyer K."/>
            <person name="Hole K."/>
            <person name="Larrea E."/>
            <person name="Timmerman E."/>
            <person name="Prieto J."/>
            <person name="Arnesen T."/>
            <person name="Sherman F."/>
            <person name="Gevaert K."/>
            <person name="Aldabe R."/>
        </authorList>
    </citation>
    <scope>IDENTIFICATION BY MASS SPECTROMETRY [LARGE SCALE ANALYSIS]</scope>
</reference>
<reference key="13">
    <citation type="journal article" date="2012" name="Proteomics">
        <title>Sites of ubiquitin attachment in Saccharomyces cerevisiae.</title>
        <authorList>
            <person name="Starita L.M."/>
            <person name="Lo R.S."/>
            <person name="Eng J.K."/>
            <person name="von Haller P.D."/>
            <person name="Fields S."/>
        </authorList>
    </citation>
    <scope>UBIQUITINATION [LARGE SCALE ANALYSIS] AT LYS-4</scope>
    <scope>IDENTIFICATION BY MASS SPECTROMETRY [LARGE SCALE ANALYSIS]</scope>
</reference>
<gene>
    <name type="primary">MKT1</name>
    <name type="ordered locus">YNL085W</name>
    <name type="ORF">N2302</name>
</gene>
<evidence type="ECO:0000256" key="1">
    <source>
        <dbReference type="SAM" id="MobiDB-lite"/>
    </source>
</evidence>
<evidence type="ECO:0000269" key="2">
    <source>
    </source>
</evidence>
<evidence type="ECO:0000269" key="3">
    <source>
    </source>
</evidence>
<evidence type="ECO:0000305" key="4"/>
<evidence type="ECO:0007744" key="5">
    <source>
    </source>
</evidence>
<evidence type="ECO:0007744" key="6">
    <source>
    </source>
</evidence>